<evidence type="ECO:0000255" key="1">
    <source>
        <dbReference type="HAMAP-Rule" id="MF_01313"/>
    </source>
</evidence>
<name>NORW_ECO24</name>
<reference key="1">
    <citation type="journal article" date="2008" name="J. Bacteriol.">
        <title>The pangenome structure of Escherichia coli: comparative genomic analysis of E. coli commensal and pathogenic isolates.</title>
        <authorList>
            <person name="Rasko D.A."/>
            <person name="Rosovitz M.J."/>
            <person name="Myers G.S.A."/>
            <person name="Mongodin E.F."/>
            <person name="Fricke W.F."/>
            <person name="Gajer P."/>
            <person name="Crabtree J."/>
            <person name="Sebaihia M."/>
            <person name="Thomson N.R."/>
            <person name="Chaudhuri R."/>
            <person name="Henderson I.R."/>
            <person name="Sperandio V."/>
            <person name="Ravel J."/>
        </authorList>
    </citation>
    <scope>NUCLEOTIDE SEQUENCE [LARGE SCALE GENOMIC DNA]</scope>
    <source>
        <strain>E24377A / ETEC</strain>
    </source>
</reference>
<gene>
    <name evidence="1" type="primary">norW</name>
    <name evidence="1" type="synonym">flrR</name>
    <name type="ordered locus">EcE24377A_2995</name>
</gene>
<organism>
    <name type="scientific">Escherichia coli O139:H28 (strain E24377A / ETEC)</name>
    <dbReference type="NCBI Taxonomy" id="331111"/>
    <lineage>
        <taxon>Bacteria</taxon>
        <taxon>Pseudomonadati</taxon>
        <taxon>Pseudomonadota</taxon>
        <taxon>Gammaproteobacteria</taxon>
        <taxon>Enterobacterales</taxon>
        <taxon>Enterobacteriaceae</taxon>
        <taxon>Escherichia</taxon>
    </lineage>
</organism>
<accession>A7ZQE0</accession>
<dbReference type="EC" id="1.18.1.-" evidence="1"/>
<dbReference type="EMBL" id="CP000800">
    <property type="protein sequence ID" value="ABV18420.1"/>
    <property type="molecule type" value="Genomic_DNA"/>
</dbReference>
<dbReference type="RefSeq" id="WP_000064760.1">
    <property type="nucleotide sequence ID" value="NC_009801.1"/>
</dbReference>
<dbReference type="SMR" id="A7ZQE0"/>
<dbReference type="GeneID" id="75205952"/>
<dbReference type="KEGG" id="ecw:EcE24377A_2995"/>
<dbReference type="HOGENOM" id="CLU_003291_4_4_6"/>
<dbReference type="UniPathway" id="UPA00638"/>
<dbReference type="Proteomes" id="UP000001122">
    <property type="component" value="Chromosome"/>
</dbReference>
<dbReference type="GO" id="GO:0005737">
    <property type="term" value="C:cytoplasm"/>
    <property type="evidence" value="ECO:0007669"/>
    <property type="project" value="UniProtKB-SubCell"/>
</dbReference>
<dbReference type="GO" id="GO:0016731">
    <property type="term" value="F:oxidoreductase activity, acting on iron-sulfur proteins as donors, NAD or NADP as acceptor"/>
    <property type="evidence" value="ECO:0007669"/>
    <property type="project" value="UniProtKB-UniRule"/>
</dbReference>
<dbReference type="FunFam" id="3.30.390.120:FF:000001">
    <property type="entry name" value="Nitric oxide reductase FlRd-NAD(+) reductase"/>
    <property type="match status" value="1"/>
</dbReference>
<dbReference type="FunFam" id="3.50.50.60:FF:000075">
    <property type="entry name" value="Nitric oxide reductase FlRd-NAD(+) reductase"/>
    <property type="match status" value="1"/>
</dbReference>
<dbReference type="Gene3D" id="3.30.390.120">
    <property type="match status" value="1"/>
</dbReference>
<dbReference type="Gene3D" id="3.50.50.60">
    <property type="entry name" value="FAD/NAD(P)-binding domain"/>
    <property type="match status" value="2"/>
</dbReference>
<dbReference type="HAMAP" id="MF_01313">
    <property type="entry name" value="NorW"/>
    <property type="match status" value="1"/>
</dbReference>
<dbReference type="InterPro" id="IPR050260">
    <property type="entry name" value="FAD-bd_OxRdtase"/>
</dbReference>
<dbReference type="InterPro" id="IPR036188">
    <property type="entry name" value="FAD/NAD-bd_sf"/>
</dbReference>
<dbReference type="InterPro" id="IPR023753">
    <property type="entry name" value="FAD/NAD-binding_dom"/>
</dbReference>
<dbReference type="InterPro" id="IPR023961">
    <property type="entry name" value="NO_rdtase_NorW"/>
</dbReference>
<dbReference type="InterPro" id="IPR041364">
    <property type="entry name" value="Rbx-bd"/>
</dbReference>
<dbReference type="NCBIfam" id="NF003437">
    <property type="entry name" value="PRK04965.1"/>
    <property type="match status" value="1"/>
</dbReference>
<dbReference type="PANTHER" id="PTHR43429:SF3">
    <property type="entry name" value="NITRITE REDUCTASE [NAD(P)H]"/>
    <property type="match status" value="1"/>
</dbReference>
<dbReference type="PANTHER" id="PTHR43429">
    <property type="entry name" value="PYRIDINE NUCLEOTIDE-DISULFIDE OXIDOREDUCTASE DOMAIN-CONTAINING"/>
    <property type="match status" value="1"/>
</dbReference>
<dbReference type="Pfam" id="PF07992">
    <property type="entry name" value="Pyr_redox_2"/>
    <property type="match status" value="1"/>
</dbReference>
<dbReference type="Pfam" id="PF18113">
    <property type="entry name" value="Rbx_binding"/>
    <property type="match status" value="1"/>
</dbReference>
<dbReference type="PRINTS" id="PR00368">
    <property type="entry name" value="FADPNR"/>
</dbReference>
<dbReference type="PRINTS" id="PR00411">
    <property type="entry name" value="PNDRDTASEI"/>
</dbReference>
<dbReference type="SUPFAM" id="SSF51905">
    <property type="entry name" value="FAD/NAD(P)-binding domain"/>
    <property type="match status" value="1"/>
</dbReference>
<keyword id="KW-0963">Cytoplasm</keyword>
<keyword id="KW-0274">FAD</keyword>
<keyword id="KW-0285">Flavoprotein</keyword>
<keyword id="KW-0520">NAD</keyword>
<keyword id="KW-0560">Oxidoreductase</keyword>
<keyword id="KW-1185">Reference proteome</keyword>
<sequence length="377" mass="41346">MSNGIVIIGSGFAARQLVKNIRKQDATIPLTLIAADSMDEYNKPDLSHVISQGQRADDLTRQTAGEFAEQFNLRLFPHTWVTDIDAEARVVKSQNNQWQYGKLVLATGASAFVPPVPGRELMLTLNSQQEYRACETQLRDARRVLIVGGGLIGSELAMDFCRAGKAVTLIDNAASILASLMPPEVSSRLQHRLTEMGVHLLLKSQLQGLEKTDSGILATLDRQRSIEVDAVIAATGLRPETALARRAGLTINRGVCVDSYLQTSNDDIYALGDCAEINGQVLPFLQPIQLSAMVLAKNLLGNNTPLKLPAMLVKIKTPELPLHLAGETQRQDLRWQINTERQGMVARGVDDADQLRAFVVSEDRMKEAFGLLKTLPM</sequence>
<comment type="function">
    <text evidence="1">One of at least two accessory proteins for anaerobic nitric oxide (NO) reductase. Reduces the rubredoxin moiety of NO reductase.</text>
</comment>
<comment type="catalytic activity">
    <reaction evidence="1">
        <text>2 reduced [nitric oxide reductase rubredoxin domain] + NAD(+) + H(+) = 2 oxidized [nitric oxide reductase rubredoxin domain] + NADH</text>
        <dbReference type="Rhea" id="RHEA:42960"/>
        <dbReference type="Rhea" id="RHEA-COMP:10304"/>
        <dbReference type="Rhea" id="RHEA-COMP:10305"/>
        <dbReference type="ChEBI" id="CHEBI:15378"/>
        <dbReference type="ChEBI" id="CHEBI:29033"/>
        <dbReference type="ChEBI" id="CHEBI:29034"/>
        <dbReference type="ChEBI" id="CHEBI:57540"/>
        <dbReference type="ChEBI" id="CHEBI:57945"/>
    </reaction>
</comment>
<comment type="cofactor">
    <cofactor evidence="1">
        <name>FAD</name>
        <dbReference type="ChEBI" id="CHEBI:57692"/>
    </cofactor>
</comment>
<comment type="pathway">
    <text evidence="1">Nitrogen metabolism; nitric oxide reduction.</text>
</comment>
<comment type="subcellular location">
    <subcellularLocation>
        <location evidence="1">Cytoplasm</location>
    </subcellularLocation>
</comment>
<comment type="similarity">
    <text evidence="1">Belongs to the FAD-dependent oxidoreductase family.</text>
</comment>
<protein>
    <recommendedName>
        <fullName evidence="1">Nitric oxide reductase FlRd-NAD(+) reductase</fullName>
        <ecNumber evidence="1">1.18.1.-</ecNumber>
    </recommendedName>
    <alternativeName>
        <fullName evidence="1">Flavorubredoxin reductase</fullName>
        <shortName evidence="1">FlRd-reductase</shortName>
        <shortName evidence="1">FlavoRb reductase</shortName>
    </alternativeName>
</protein>
<proteinExistence type="inferred from homology"/>
<feature type="chain" id="PRO_1000067509" description="Nitric oxide reductase FlRd-NAD(+) reductase">
    <location>
        <begin position="1"/>
        <end position="377"/>
    </location>
</feature>